<dbReference type="EMBL" id="AM286415">
    <property type="protein sequence ID" value="CAL13143.1"/>
    <property type="molecule type" value="Genomic_DNA"/>
</dbReference>
<dbReference type="RefSeq" id="WP_005163438.1">
    <property type="nucleotide sequence ID" value="NC_008800.1"/>
</dbReference>
<dbReference type="RefSeq" id="YP_001007290.1">
    <property type="nucleotide sequence ID" value="NC_008800.1"/>
</dbReference>
<dbReference type="SMR" id="A1JNH5"/>
<dbReference type="KEGG" id="yen:YE3107"/>
<dbReference type="PATRIC" id="fig|393305.7.peg.3307"/>
<dbReference type="eggNOG" id="COG0254">
    <property type="taxonomic scope" value="Bacteria"/>
</dbReference>
<dbReference type="HOGENOM" id="CLU_114306_2_1_6"/>
<dbReference type="OrthoDB" id="9803251at2"/>
<dbReference type="Proteomes" id="UP000000642">
    <property type="component" value="Chromosome"/>
</dbReference>
<dbReference type="GO" id="GO:1990904">
    <property type="term" value="C:ribonucleoprotein complex"/>
    <property type="evidence" value="ECO:0007669"/>
    <property type="project" value="UniProtKB-KW"/>
</dbReference>
<dbReference type="GO" id="GO:0005840">
    <property type="term" value="C:ribosome"/>
    <property type="evidence" value="ECO:0007669"/>
    <property type="project" value="UniProtKB-KW"/>
</dbReference>
<dbReference type="GO" id="GO:0003735">
    <property type="term" value="F:structural constituent of ribosome"/>
    <property type="evidence" value="ECO:0007669"/>
    <property type="project" value="InterPro"/>
</dbReference>
<dbReference type="GO" id="GO:0006412">
    <property type="term" value="P:translation"/>
    <property type="evidence" value="ECO:0007669"/>
    <property type="project" value="UniProtKB-UniRule"/>
</dbReference>
<dbReference type="Gene3D" id="4.10.830.30">
    <property type="entry name" value="Ribosomal protein L31"/>
    <property type="match status" value="1"/>
</dbReference>
<dbReference type="HAMAP" id="MF_00502">
    <property type="entry name" value="Ribosomal_bL31_2"/>
    <property type="match status" value="1"/>
</dbReference>
<dbReference type="InterPro" id="IPR034704">
    <property type="entry name" value="Ribosomal_bL28/bL31-like_sf"/>
</dbReference>
<dbReference type="InterPro" id="IPR002150">
    <property type="entry name" value="Ribosomal_bL31"/>
</dbReference>
<dbReference type="InterPro" id="IPR027493">
    <property type="entry name" value="Ribosomal_bL31_B"/>
</dbReference>
<dbReference type="InterPro" id="IPR042105">
    <property type="entry name" value="Ribosomal_bL31_sf"/>
</dbReference>
<dbReference type="NCBIfam" id="TIGR00105">
    <property type="entry name" value="L31"/>
    <property type="match status" value="1"/>
</dbReference>
<dbReference type="NCBIfam" id="NF002462">
    <property type="entry name" value="PRK01678.1"/>
    <property type="match status" value="1"/>
</dbReference>
<dbReference type="PANTHER" id="PTHR33280">
    <property type="entry name" value="50S RIBOSOMAL PROTEIN L31, CHLOROPLASTIC"/>
    <property type="match status" value="1"/>
</dbReference>
<dbReference type="PANTHER" id="PTHR33280:SF1">
    <property type="entry name" value="LARGE RIBOSOMAL SUBUNIT PROTEIN BL31C"/>
    <property type="match status" value="1"/>
</dbReference>
<dbReference type="Pfam" id="PF01197">
    <property type="entry name" value="Ribosomal_L31"/>
    <property type="match status" value="1"/>
</dbReference>
<dbReference type="PRINTS" id="PR01249">
    <property type="entry name" value="RIBOSOMALL31"/>
</dbReference>
<dbReference type="SUPFAM" id="SSF143800">
    <property type="entry name" value="L28p-like"/>
    <property type="match status" value="1"/>
</dbReference>
<keyword id="KW-0687">Ribonucleoprotein</keyword>
<keyword id="KW-0689">Ribosomal protein</keyword>
<organism>
    <name type="scientific">Yersinia enterocolitica serotype O:8 / biotype 1B (strain NCTC 13174 / 8081)</name>
    <dbReference type="NCBI Taxonomy" id="393305"/>
    <lineage>
        <taxon>Bacteria</taxon>
        <taxon>Pseudomonadati</taxon>
        <taxon>Pseudomonadota</taxon>
        <taxon>Gammaproteobacteria</taxon>
        <taxon>Enterobacterales</taxon>
        <taxon>Yersiniaceae</taxon>
        <taxon>Yersinia</taxon>
    </lineage>
</organism>
<comment type="subunit">
    <text evidence="1">Part of the 50S ribosomal subunit.</text>
</comment>
<comment type="similarity">
    <text evidence="1">Belongs to the bacterial ribosomal protein bL31 family. Type B subfamily.</text>
</comment>
<feature type="chain" id="PRO_1000014724" description="Large ribosomal subunit protein bL31B">
    <location>
        <begin position="1"/>
        <end position="86"/>
    </location>
</feature>
<accession>A1JNH5</accession>
<protein>
    <recommendedName>
        <fullName evidence="1">Large ribosomal subunit protein bL31B</fullName>
    </recommendedName>
    <alternativeName>
        <fullName evidence="2">50S ribosomal protein L31 type B</fullName>
    </alternativeName>
</protein>
<reference key="1">
    <citation type="journal article" date="2006" name="PLoS Genet.">
        <title>The complete genome sequence and comparative genome analysis of the high pathogenicity Yersinia enterocolitica strain 8081.</title>
        <authorList>
            <person name="Thomson N.R."/>
            <person name="Howard S."/>
            <person name="Wren B.W."/>
            <person name="Holden M.T.G."/>
            <person name="Crossman L."/>
            <person name="Challis G.L."/>
            <person name="Churcher C."/>
            <person name="Mungall K."/>
            <person name="Brooks K."/>
            <person name="Chillingworth T."/>
            <person name="Feltwell T."/>
            <person name="Abdellah Z."/>
            <person name="Hauser H."/>
            <person name="Jagels K."/>
            <person name="Maddison M."/>
            <person name="Moule S."/>
            <person name="Sanders M."/>
            <person name="Whitehead S."/>
            <person name="Quail M.A."/>
            <person name="Dougan G."/>
            <person name="Parkhill J."/>
            <person name="Prentice M.B."/>
        </authorList>
    </citation>
    <scope>NUCLEOTIDE SEQUENCE [LARGE SCALE GENOMIC DNA]</scope>
    <source>
        <strain>NCTC 13174 / 8081</strain>
    </source>
</reference>
<evidence type="ECO:0000255" key="1">
    <source>
        <dbReference type="HAMAP-Rule" id="MF_00502"/>
    </source>
</evidence>
<evidence type="ECO:0000305" key="2"/>
<name>RL31B_YERE8</name>
<gene>
    <name evidence="1" type="primary">rpmE2</name>
    <name type="ordered locus">YE3107</name>
</gene>
<proteinExistence type="inferred from homology"/>
<sequence>MKPGIHPNYRTVVFHDTSADTYFTVGSTIATARTIERDGQTYPYVTLDISSASHPYYTGKQKEFSKEGSAARFHQRYGSFLTKKAS</sequence>